<gene>
    <name evidence="1" type="primary">whiA</name>
    <name type="ordered locus">CLH_3090</name>
</gene>
<comment type="function">
    <text evidence="1">Involved in cell division and chromosome segregation.</text>
</comment>
<comment type="similarity">
    <text evidence="1">Belongs to the WhiA family.</text>
</comment>
<evidence type="ECO:0000255" key="1">
    <source>
        <dbReference type="HAMAP-Rule" id="MF_01420"/>
    </source>
</evidence>
<organism>
    <name type="scientific">Clostridium botulinum (strain Alaska E43 / Type E3)</name>
    <dbReference type="NCBI Taxonomy" id="508767"/>
    <lineage>
        <taxon>Bacteria</taxon>
        <taxon>Bacillati</taxon>
        <taxon>Bacillota</taxon>
        <taxon>Clostridia</taxon>
        <taxon>Eubacteriales</taxon>
        <taxon>Clostridiaceae</taxon>
        <taxon>Clostridium</taxon>
    </lineage>
</organism>
<feature type="chain" id="PRO_0000376457" description="Probable cell division protein WhiA">
    <location>
        <begin position="1"/>
        <end position="315"/>
    </location>
</feature>
<feature type="DNA-binding region" description="H-T-H motif" evidence="1">
    <location>
        <begin position="280"/>
        <end position="313"/>
    </location>
</feature>
<keyword id="KW-0131">Cell cycle</keyword>
<keyword id="KW-0132">Cell division</keyword>
<keyword id="KW-0238">DNA-binding</keyword>
<sequence length="315" mass="35731">MSFSSKVKGEICRYVDMCKEDALAEISAIMKVSGTIAFSGSGLSFKMTTENPASARLIFTLLKEHFNIHSKLMVKKSNSLKKNNIYMVVISEDMGVRELLYETGILQDIDGIMNLNYRINKSMIETEENRRAYIRGAFIGGGSISNPERTYHLEFVTHSEEYAIDLKDIINTFGLNSKVIQRKSSHIIYIKEGEQIVDLLNIIGAHASLLELENIRIMKEMRNNVNRLVNCETANLSKTVNAAVRQVESIRLIQNKIGLQRLPQNLREVAELRLNYPDESLKELGQMLDPQVGKSGINHRLRKIEKIAEELRTGN</sequence>
<reference key="1">
    <citation type="submission" date="2008-05" db="EMBL/GenBank/DDBJ databases">
        <title>Complete genome sequence of Clostridium botulinum E3 str. Alaska E43.</title>
        <authorList>
            <person name="Brinkac L.M."/>
            <person name="Brown J.L."/>
            <person name="Bruce D."/>
            <person name="Detter C."/>
            <person name="Munk C."/>
            <person name="Smith L.A."/>
            <person name="Smith T.J."/>
            <person name="Sutton G."/>
            <person name="Brettin T.S."/>
        </authorList>
    </citation>
    <scope>NUCLEOTIDE SEQUENCE [LARGE SCALE GENOMIC DNA]</scope>
    <source>
        <strain>Alaska E43 / Type E3</strain>
    </source>
</reference>
<proteinExistence type="inferred from homology"/>
<name>WHIA_CLOBA</name>
<protein>
    <recommendedName>
        <fullName evidence="1">Probable cell division protein WhiA</fullName>
    </recommendedName>
</protein>
<accession>B2UZY1</accession>
<dbReference type="EMBL" id="CP001078">
    <property type="protein sequence ID" value="ACD53129.1"/>
    <property type="molecule type" value="Genomic_DNA"/>
</dbReference>
<dbReference type="RefSeq" id="WP_003370187.1">
    <property type="nucleotide sequence ID" value="NC_010723.1"/>
</dbReference>
<dbReference type="SMR" id="B2UZY1"/>
<dbReference type="KEGG" id="cbt:CLH_3090"/>
<dbReference type="HOGENOM" id="CLU_053282_0_0_9"/>
<dbReference type="GO" id="GO:0003677">
    <property type="term" value="F:DNA binding"/>
    <property type="evidence" value="ECO:0007669"/>
    <property type="project" value="UniProtKB-UniRule"/>
</dbReference>
<dbReference type="GO" id="GO:0004519">
    <property type="term" value="F:endonuclease activity"/>
    <property type="evidence" value="ECO:0007669"/>
    <property type="project" value="InterPro"/>
</dbReference>
<dbReference type="GO" id="GO:0051301">
    <property type="term" value="P:cell division"/>
    <property type="evidence" value="ECO:0007669"/>
    <property type="project" value="UniProtKB-UniRule"/>
</dbReference>
<dbReference type="GO" id="GO:0043937">
    <property type="term" value="P:regulation of sporulation"/>
    <property type="evidence" value="ECO:0007669"/>
    <property type="project" value="InterPro"/>
</dbReference>
<dbReference type="Gene3D" id="3.10.28.10">
    <property type="entry name" value="Homing endonucleases"/>
    <property type="match status" value="1"/>
</dbReference>
<dbReference type="HAMAP" id="MF_01420">
    <property type="entry name" value="HTH_type_WhiA"/>
    <property type="match status" value="1"/>
</dbReference>
<dbReference type="InterPro" id="IPR027434">
    <property type="entry name" value="Homing_endonucl"/>
</dbReference>
<dbReference type="InterPro" id="IPR004042">
    <property type="entry name" value="Intein_endonuc_central"/>
</dbReference>
<dbReference type="InterPro" id="IPR018478">
    <property type="entry name" value="Sporu_reg_WhiA_N_dom"/>
</dbReference>
<dbReference type="InterPro" id="IPR003802">
    <property type="entry name" value="Sporulation_regulator_WhiA"/>
</dbReference>
<dbReference type="InterPro" id="IPR023054">
    <property type="entry name" value="Sporulation_regulator_WhiA_C"/>
</dbReference>
<dbReference type="InterPro" id="IPR039518">
    <property type="entry name" value="WhiA_LAGLIDADG_dom"/>
</dbReference>
<dbReference type="NCBIfam" id="TIGR00647">
    <property type="entry name" value="DNA_bind_WhiA"/>
    <property type="match status" value="1"/>
</dbReference>
<dbReference type="PANTHER" id="PTHR37307">
    <property type="entry name" value="CELL DIVISION PROTEIN WHIA-RELATED"/>
    <property type="match status" value="1"/>
</dbReference>
<dbReference type="PANTHER" id="PTHR37307:SF1">
    <property type="entry name" value="CELL DIVISION PROTEIN WHIA-RELATED"/>
    <property type="match status" value="1"/>
</dbReference>
<dbReference type="Pfam" id="PF02650">
    <property type="entry name" value="HTH_WhiA"/>
    <property type="match status" value="1"/>
</dbReference>
<dbReference type="Pfam" id="PF14527">
    <property type="entry name" value="LAGLIDADG_WhiA"/>
    <property type="match status" value="1"/>
</dbReference>
<dbReference type="Pfam" id="PF10298">
    <property type="entry name" value="WhiA_N"/>
    <property type="match status" value="1"/>
</dbReference>
<dbReference type="SUPFAM" id="SSF55608">
    <property type="entry name" value="Homing endonucleases"/>
    <property type="match status" value="1"/>
</dbReference>
<dbReference type="PROSITE" id="PS50819">
    <property type="entry name" value="INTEIN_ENDONUCLEASE"/>
    <property type="match status" value="1"/>
</dbReference>